<protein>
    <recommendedName>
        <fullName>Serum amyloid P-component</fullName>
        <shortName>SAP</shortName>
    </recommendedName>
    <alternativeName>
        <fullName>9.5S alpha-1-glycoprotein</fullName>
    </alternativeName>
    <component>
        <recommendedName>
            <fullName>Serum amyloid P-component(1-203)</fullName>
        </recommendedName>
    </component>
</protein>
<gene>
    <name type="primary">APCS</name>
    <name type="synonym">PTX2</name>
</gene>
<proteinExistence type="evidence at protein level"/>
<keyword id="KW-0002">3D-structure</keyword>
<keyword id="KW-0034">Amyloid</keyword>
<keyword id="KW-0106">Calcium</keyword>
<keyword id="KW-0903">Direct protein sequencing</keyword>
<keyword id="KW-1015">Disulfide bond</keyword>
<keyword id="KW-0325">Glycoprotein</keyword>
<keyword id="KW-0430">Lectin</keyword>
<keyword id="KW-0479">Metal-binding</keyword>
<keyword id="KW-1267">Proteomics identification</keyword>
<keyword id="KW-1185">Reference proteome</keyword>
<keyword id="KW-0964">Secreted</keyword>
<keyword id="KW-0732">Signal</keyword>
<reference key="1">
    <citation type="journal article" date="1985" name="J. Biol. Chem.">
        <title>Human serum amyloid P component. cDNA isolation, complete sequence of pre-serum amyloid P component, and localization of the gene to chromosome 1.</title>
        <authorList>
            <person name="Mantzouranis E.C."/>
            <person name="Dowton S.B."/>
            <person name="Whitehead A.S."/>
            <person name="Edge M.D."/>
            <person name="Bruns G.A.P."/>
            <person name="Colten H.R."/>
        </authorList>
    </citation>
    <scope>NUCLEOTIDE SEQUENCE [MRNA]</scope>
</reference>
<reference key="2">
    <citation type="journal article" date="1986" name="J. Biochem.">
        <title>Isolation and characterization of the complete complementary and genomic DNA sequences of human serum amyloid P component.</title>
        <authorList>
            <person name="Ohnishi S."/>
            <person name="Maeda S."/>
            <person name="Shimada K."/>
            <person name="Arao T."/>
        </authorList>
    </citation>
    <scope>NUCLEOTIDE SEQUENCE [MRNA]</scope>
</reference>
<reference key="3">
    <citation type="submission" date="2003-05" db="EMBL/GenBank/DDBJ databases">
        <title>Cloning of human full-length CDSs in BD Creator(TM) system donor vector.</title>
        <authorList>
            <person name="Kalnine N."/>
            <person name="Chen X."/>
            <person name="Rolfs A."/>
            <person name="Halleck A."/>
            <person name="Hines L."/>
            <person name="Eisenstein S."/>
            <person name="Koundinya M."/>
            <person name="Raphael J."/>
            <person name="Moreira D."/>
            <person name="Kelley T."/>
            <person name="LaBaer J."/>
            <person name="Lin Y."/>
            <person name="Phelan M."/>
            <person name="Farmer A."/>
        </authorList>
    </citation>
    <scope>NUCLEOTIDE SEQUENCE [LARGE SCALE MRNA]</scope>
</reference>
<reference key="4">
    <citation type="submission" date="2004-05" db="EMBL/GenBank/DDBJ databases">
        <title>Cloning of human full open reading frames in Gateway(TM) system entry vector (pDONR201).</title>
        <authorList>
            <person name="Ebert L."/>
            <person name="Schick M."/>
            <person name="Neubert P."/>
            <person name="Schatten R."/>
            <person name="Henze S."/>
            <person name="Korn B."/>
        </authorList>
    </citation>
    <scope>NUCLEOTIDE SEQUENCE [LARGE SCALE MRNA]</scope>
</reference>
<reference key="5">
    <citation type="journal article" date="2006" name="Nature">
        <title>The DNA sequence and biological annotation of human chromosome 1.</title>
        <authorList>
            <person name="Gregory S.G."/>
            <person name="Barlow K.F."/>
            <person name="McLay K.E."/>
            <person name="Kaul R."/>
            <person name="Swarbreck D."/>
            <person name="Dunham A."/>
            <person name="Scott C.E."/>
            <person name="Howe K.L."/>
            <person name="Woodfine K."/>
            <person name="Spencer C.C.A."/>
            <person name="Jones M.C."/>
            <person name="Gillson C."/>
            <person name="Searle S."/>
            <person name="Zhou Y."/>
            <person name="Kokocinski F."/>
            <person name="McDonald L."/>
            <person name="Evans R."/>
            <person name="Phillips K."/>
            <person name="Atkinson A."/>
            <person name="Cooper R."/>
            <person name="Jones C."/>
            <person name="Hall R.E."/>
            <person name="Andrews T.D."/>
            <person name="Lloyd C."/>
            <person name="Ainscough R."/>
            <person name="Almeida J.P."/>
            <person name="Ambrose K.D."/>
            <person name="Anderson F."/>
            <person name="Andrew R.W."/>
            <person name="Ashwell R.I.S."/>
            <person name="Aubin K."/>
            <person name="Babbage A.K."/>
            <person name="Bagguley C.L."/>
            <person name="Bailey J."/>
            <person name="Beasley H."/>
            <person name="Bethel G."/>
            <person name="Bird C.P."/>
            <person name="Bray-Allen S."/>
            <person name="Brown J.Y."/>
            <person name="Brown A.J."/>
            <person name="Buckley D."/>
            <person name="Burton J."/>
            <person name="Bye J."/>
            <person name="Carder C."/>
            <person name="Chapman J.C."/>
            <person name="Clark S.Y."/>
            <person name="Clarke G."/>
            <person name="Clee C."/>
            <person name="Cobley V."/>
            <person name="Collier R.E."/>
            <person name="Corby N."/>
            <person name="Coville G.J."/>
            <person name="Davies J."/>
            <person name="Deadman R."/>
            <person name="Dunn M."/>
            <person name="Earthrowl M."/>
            <person name="Ellington A.G."/>
            <person name="Errington H."/>
            <person name="Frankish A."/>
            <person name="Frankland J."/>
            <person name="French L."/>
            <person name="Garner P."/>
            <person name="Garnett J."/>
            <person name="Gay L."/>
            <person name="Ghori M.R.J."/>
            <person name="Gibson R."/>
            <person name="Gilby L.M."/>
            <person name="Gillett W."/>
            <person name="Glithero R.J."/>
            <person name="Grafham D.V."/>
            <person name="Griffiths C."/>
            <person name="Griffiths-Jones S."/>
            <person name="Grocock R."/>
            <person name="Hammond S."/>
            <person name="Harrison E.S.I."/>
            <person name="Hart E."/>
            <person name="Haugen E."/>
            <person name="Heath P.D."/>
            <person name="Holmes S."/>
            <person name="Holt K."/>
            <person name="Howden P.J."/>
            <person name="Hunt A.R."/>
            <person name="Hunt S.E."/>
            <person name="Hunter G."/>
            <person name="Isherwood J."/>
            <person name="James R."/>
            <person name="Johnson C."/>
            <person name="Johnson D."/>
            <person name="Joy A."/>
            <person name="Kay M."/>
            <person name="Kershaw J.K."/>
            <person name="Kibukawa M."/>
            <person name="Kimberley A.M."/>
            <person name="King A."/>
            <person name="Knights A.J."/>
            <person name="Lad H."/>
            <person name="Laird G."/>
            <person name="Lawlor S."/>
            <person name="Leongamornlert D.A."/>
            <person name="Lloyd D.M."/>
            <person name="Loveland J."/>
            <person name="Lovell J."/>
            <person name="Lush M.J."/>
            <person name="Lyne R."/>
            <person name="Martin S."/>
            <person name="Mashreghi-Mohammadi M."/>
            <person name="Matthews L."/>
            <person name="Matthews N.S.W."/>
            <person name="McLaren S."/>
            <person name="Milne S."/>
            <person name="Mistry S."/>
            <person name="Moore M.J.F."/>
            <person name="Nickerson T."/>
            <person name="O'Dell C.N."/>
            <person name="Oliver K."/>
            <person name="Palmeiri A."/>
            <person name="Palmer S.A."/>
            <person name="Parker A."/>
            <person name="Patel D."/>
            <person name="Pearce A.V."/>
            <person name="Peck A.I."/>
            <person name="Pelan S."/>
            <person name="Phelps K."/>
            <person name="Phillimore B.J."/>
            <person name="Plumb R."/>
            <person name="Rajan J."/>
            <person name="Raymond C."/>
            <person name="Rouse G."/>
            <person name="Saenphimmachak C."/>
            <person name="Sehra H.K."/>
            <person name="Sheridan E."/>
            <person name="Shownkeen R."/>
            <person name="Sims S."/>
            <person name="Skuce C.D."/>
            <person name="Smith M."/>
            <person name="Steward C."/>
            <person name="Subramanian S."/>
            <person name="Sycamore N."/>
            <person name="Tracey A."/>
            <person name="Tromans A."/>
            <person name="Van Helmond Z."/>
            <person name="Wall M."/>
            <person name="Wallis J.M."/>
            <person name="White S."/>
            <person name="Whitehead S.L."/>
            <person name="Wilkinson J.E."/>
            <person name="Willey D.L."/>
            <person name="Williams H."/>
            <person name="Wilming L."/>
            <person name="Wray P.W."/>
            <person name="Wu Z."/>
            <person name="Coulson A."/>
            <person name="Vaudin M."/>
            <person name="Sulston J.E."/>
            <person name="Durbin R.M."/>
            <person name="Hubbard T."/>
            <person name="Wooster R."/>
            <person name="Dunham I."/>
            <person name="Carter N.P."/>
            <person name="McVean G."/>
            <person name="Ross M.T."/>
            <person name="Harrow J."/>
            <person name="Olson M.V."/>
            <person name="Beck S."/>
            <person name="Rogers J."/>
            <person name="Bentley D.R."/>
        </authorList>
    </citation>
    <scope>NUCLEOTIDE SEQUENCE [LARGE SCALE GENOMIC DNA]</scope>
</reference>
<reference key="6">
    <citation type="journal article" date="2004" name="Genome Res.">
        <title>The status, quality, and expansion of the NIH full-length cDNA project: the Mammalian Gene Collection (MGC).</title>
        <authorList>
            <consortium name="The MGC Project Team"/>
        </authorList>
    </citation>
    <scope>NUCLEOTIDE SEQUENCE [LARGE SCALE MRNA]</scope>
    <source>
        <tissue>Skeletal muscle</tissue>
    </source>
</reference>
<reference key="7">
    <citation type="journal article" date="1985" name="J. Biol. Chem.">
        <title>The primary structure of human tissue amyloid P component from a patient with primary idiopathic amyloidosis.</title>
        <authorList>
            <person name="Prelli F."/>
            <person name="Pras M."/>
            <person name="Frangione B."/>
        </authorList>
    </citation>
    <scope>PROTEIN SEQUENCE OF 20-223</scope>
</reference>
<reference key="8">
    <citation type="journal article" date="1978" name="Biochemistry">
        <title>Human plasma P component: isolation and characterization.</title>
        <authorList>
            <person name="Thompson A.R."/>
            <person name="Enfield D.L."/>
        </authorList>
    </citation>
    <scope>PROTEIN SEQUENCE OF 20-49</scope>
</reference>
<reference key="9">
    <citation type="journal article" date="1994" name="Proc. Natl. Acad. Sci. U.S.A.">
        <title>Human serum amyloid P component is an invariant constituent of amyloid deposits and has a uniquely homogeneous glycostructure.</title>
        <authorList>
            <person name="Pepys M.B."/>
            <person name="Rademacher T.W."/>
            <person name="Amatayakul-Chantler S."/>
            <person name="Williams P."/>
            <person name="Noble G.E."/>
            <person name="Hutchinson W.L."/>
            <person name="Hawkins P.N."/>
            <person name="Nelson S.R."/>
            <person name="Gallimore J.R."/>
            <person name="Herbert J."/>
            <person name="Hutton T."/>
            <person name="Dwek R.A."/>
        </authorList>
    </citation>
    <scope>STRUCTURE OF CARBOHYDRATE</scope>
    <scope>MASS SPECTROMETRY</scope>
</reference>
<reference key="10">
    <citation type="journal article" date="2004" name="Proteomics">
        <title>Proteomic characterization of novel serum amyloid P component variants from human plasma and urine.</title>
        <authorList>
            <person name="Kiernan U.A."/>
            <person name="Nedelkov D."/>
            <person name="Tubbs K.A."/>
            <person name="Niederkofler E.E."/>
            <person name="Nelson R.W."/>
        </authorList>
    </citation>
    <scope>TISSUE SPECIFICITY</scope>
    <scope>MASS SPECTROMETRY</scope>
</reference>
<reference key="11">
    <citation type="journal article" date="2005" name="J. Proteome Res.">
        <title>Human plasma N-glycoproteome analysis by immunoaffinity subtraction, hydrazide chemistry, and mass spectrometry.</title>
        <authorList>
            <person name="Liu T."/>
            <person name="Qian W.-J."/>
            <person name="Gritsenko M.A."/>
            <person name="Camp D.G. II"/>
            <person name="Monroe M.E."/>
            <person name="Moore R.J."/>
            <person name="Smith R.D."/>
        </authorList>
    </citation>
    <scope>GLYCOSYLATION [LARGE SCALE ANALYSIS] AT ASN-51</scope>
    <source>
        <tissue>Plasma</tissue>
    </source>
</reference>
<reference key="12">
    <citation type="journal article" date="2009" name="J. Proteome Res.">
        <title>Glycoproteomics analysis of human liver tissue by combination of multiple enzyme digestion and hydrazide chemistry.</title>
        <authorList>
            <person name="Chen R."/>
            <person name="Jiang X."/>
            <person name="Sun D."/>
            <person name="Han G."/>
            <person name="Wang F."/>
            <person name="Ye M."/>
            <person name="Wang L."/>
            <person name="Zou H."/>
        </authorList>
    </citation>
    <scope>GLYCOSYLATION [LARGE SCALE ANALYSIS] AT ASN-51</scope>
    <source>
        <tissue>Liver</tissue>
    </source>
</reference>
<reference key="13">
    <citation type="journal article" date="2011" name="BMC Syst. Biol.">
        <title>Initial characterization of the human central proteome.</title>
        <authorList>
            <person name="Burkard T.R."/>
            <person name="Planyavsky M."/>
            <person name="Kaupe I."/>
            <person name="Breitwieser F.P."/>
            <person name="Buerckstuemmer T."/>
            <person name="Bennett K.L."/>
            <person name="Superti-Furga G."/>
            <person name="Colinge J."/>
        </authorList>
    </citation>
    <scope>IDENTIFICATION BY MASS SPECTROMETRY [LARGE SCALE ANALYSIS]</scope>
</reference>
<reference key="14">
    <citation type="journal article" date="2014" name="J. Proteomics">
        <title>An enzyme assisted RP-RPLC approach for in-depth analysis of human liver phosphoproteome.</title>
        <authorList>
            <person name="Bian Y."/>
            <person name="Song C."/>
            <person name="Cheng K."/>
            <person name="Dong M."/>
            <person name="Wang F."/>
            <person name="Huang J."/>
            <person name="Sun D."/>
            <person name="Wang L."/>
            <person name="Ye M."/>
            <person name="Zou H."/>
        </authorList>
    </citation>
    <scope>IDENTIFICATION BY MASS SPECTROMETRY [LARGE SCALE ANALYSIS]</scope>
    <source>
        <tissue>Liver</tissue>
    </source>
</reference>
<reference key="15">
    <citation type="journal article" date="1994" name="Nature">
        <title>Structure of pentameric human serum amyloid P component.</title>
        <authorList>
            <person name="Emsley J."/>
            <person name="White H.E."/>
            <person name="O'Hara B."/>
            <person name="Oliva G."/>
            <person name="Srinivasan N."/>
            <person name="Tickle I.J."/>
            <person name="Blundell T.L."/>
            <person name="Pepys M.B."/>
            <person name="Wood S.P."/>
        </authorList>
    </citation>
    <scope>X-RAY CRYSTALLOGRAPHY (2.0 ANGSTROMS)</scope>
</reference>
<reference key="16">
    <citation type="journal article" date="1997" name="J. Mol. Biol.">
        <title>Crystal structure of a decameric complex of human serum amyloid P component with bound dAMP.</title>
        <authorList>
            <person name="Hohenester E."/>
            <person name="Hutchinson W.L."/>
            <person name="Pepys M.B."/>
            <person name="Wood S.P."/>
        </authorList>
    </citation>
    <scope>X-RAY CRYSTALLOGRAPHY (2.8 ANGSTROMS)</scope>
</reference>
<reference key="17">
    <citation type="journal article" date="2006" name="Science">
        <title>The consensus coding sequences of human breast and colorectal cancers.</title>
        <authorList>
            <person name="Sjoeblom T."/>
            <person name="Jones S."/>
            <person name="Wood L.D."/>
            <person name="Parsons D.W."/>
            <person name="Lin J."/>
            <person name="Barber T.D."/>
            <person name="Mandelker D."/>
            <person name="Leary R.J."/>
            <person name="Ptak J."/>
            <person name="Silliman N."/>
            <person name="Szabo S."/>
            <person name="Buckhaults P."/>
            <person name="Farrell C."/>
            <person name="Meeh P."/>
            <person name="Markowitz S.D."/>
            <person name="Willis J."/>
            <person name="Dawson D."/>
            <person name="Willson J.K.V."/>
            <person name="Gazdar A.F."/>
            <person name="Hartigan J."/>
            <person name="Wu L."/>
            <person name="Liu C."/>
            <person name="Parmigiani G."/>
            <person name="Park B.H."/>
            <person name="Bachman K.E."/>
            <person name="Papadopoulos N."/>
            <person name="Vogelstein B."/>
            <person name="Kinzler K.W."/>
            <person name="Velculescu V.E."/>
        </authorList>
    </citation>
    <scope>VARIANT [LARGE SCALE ANALYSIS] SER-141</scope>
</reference>
<name>SAMP_HUMAN</name>
<sequence length="223" mass="25387">MNKPLLWISVLTSLLEAFAHTDLSGKVFVFPRESVTDHVNLITPLEKPLQNFTLCFRAYSDLSRAYSLFSYNTQGRDNELLVYKERVGEYSLYIGRHKVTSKVIEKFPAPVHICVSWESSSGIAEFWINGTPLVKKGLRQGYFVEAQPKIVLGQEQDSYGGKFDRSQSFVGEIGDLYMWDSVLPPENILSAYQGTPLPANILDWQALNYEIRGYVIIKPLVWV</sequence>
<dbReference type="EMBL" id="D00097">
    <property type="protein sequence ID" value="BAA00060.1"/>
    <property type="molecule type" value="Genomic_DNA"/>
</dbReference>
<dbReference type="EMBL" id="M10944">
    <property type="protein sequence ID" value="AAA60302.1"/>
    <property type="molecule type" value="mRNA"/>
</dbReference>
<dbReference type="EMBL" id="X04608">
    <property type="protein sequence ID" value="CAA28275.1"/>
    <property type="molecule type" value="mRNA"/>
</dbReference>
<dbReference type="EMBL" id="CR450313">
    <property type="protein sequence ID" value="CAG29309.1"/>
    <property type="molecule type" value="mRNA"/>
</dbReference>
<dbReference type="EMBL" id="AL445528">
    <property type="status" value="NOT_ANNOTATED_CDS"/>
    <property type="molecule type" value="Genomic_DNA"/>
</dbReference>
<dbReference type="EMBL" id="BT006750">
    <property type="protein sequence ID" value="AAP35396.1"/>
    <property type="molecule type" value="mRNA"/>
</dbReference>
<dbReference type="EMBL" id="BC007039">
    <property type="protein sequence ID" value="AAH07039.1"/>
    <property type="molecule type" value="mRNA"/>
</dbReference>
<dbReference type="EMBL" id="BC007058">
    <property type="protein sequence ID" value="AAH07058.1"/>
    <property type="molecule type" value="mRNA"/>
</dbReference>
<dbReference type="CCDS" id="CCDS1186.1"/>
<dbReference type="PIR" id="A25503">
    <property type="entry name" value="YLHUP"/>
</dbReference>
<dbReference type="RefSeq" id="NP_001630.1">
    <property type="nucleotide sequence ID" value="NM_001639.4"/>
</dbReference>
<dbReference type="PDB" id="1GYK">
    <property type="method" value="X-ray"/>
    <property type="resolution" value="2.20 A"/>
    <property type="chains" value="A/B/C/D/E=20-223"/>
</dbReference>
<dbReference type="PDB" id="1LGN">
    <property type="method" value="X-ray"/>
    <property type="resolution" value="2.80 A"/>
    <property type="chains" value="A/B/C/D/E=20-223"/>
</dbReference>
<dbReference type="PDB" id="1SAC">
    <property type="method" value="X-ray"/>
    <property type="resolution" value="2.00 A"/>
    <property type="chains" value="A/B/C/D/E=20-223"/>
</dbReference>
<dbReference type="PDB" id="2A3W">
    <property type="method" value="X-ray"/>
    <property type="resolution" value="2.20 A"/>
    <property type="chains" value="A/B/C/D/E/F/G/H/I/J/K/L/M/N/O/P/Q/R/S/T=20-223"/>
</dbReference>
<dbReference type="PDB" id="2A3X">
    <property type="method" value="X-ray"/>
    <property type="resolution" value="3.00 A"/>
    <property type="chains" value="A/B/C/D/E/F/G/H/I/J=20-223"/>
</dbReference>
<dbReference type="PDB" id="2A3Y">
    <property type="method" value="X-ray"/>
    <property type="resolution" value="2.00 A"/>
    <property type="chains" value="A/B/C/D/E=20-223"/>
</dbReference>
<dbReference type="PDB" id="2W08">
    <property type="method" value="X-ray"/>
    <property type="resolution" value="1.70 A"/>
    <property type="chains" value="A/B/C/D/E=20-223"/>
</dbReference>
<dbReference type="PDB" id="3D5O">
    <property type="method" value="X-ray"/>
    <property type="resolution" value="2.80 A"/>
    <property type="chains" value="A/B/C/D/E=20-223"/>
</dbReference>
<dbReference type="PDB" id="3KQR">
    <property type="method" value="X-ray"/>
    <property type="resolution" value="1.50 A"/>
    <property type="chains" value="A/B/C/D/E=20-223"/>
</dbReference>
<dbReference type="PDB" id="4AVS">
    <property type="method" value="X-ray"/>
    <property type="resolution" value="1.40 A"/>
    <property type="chains" value="A/B/C/D/E=20-223"/>
</dbReference>
<dbReference type="PDB" id="4AVT">
    <property type="method" value="X-ray"/>
    <property type="resolution" value="3.20 A"/>
    <property type="chains" value="A/B/C/D/E/F/G/H/I/J=20-223"/>
</dbReference>
<dbReference type="PDB" id="4AVV">
    <property type="method" value="X-ray"/>
    <property type="resolution" value="1.60 A"/>
    <property type="chains" value="A/B/C/D/E=20-223"/>
</dbReference>
<dbReference type="PDB" id="4AYU">
    <property type="method" value="X-ray"/>
    <property type="resolution" value="1.50 A"/>
    <property type="chains" value="A/B/C/D/E=20-223"/>
</dbReference>
<dbReference type="PDBsum" id="1GYK"/>
<dbReference type="PDBsum" id="1LGN"/>
<dbReference type="PDBsum" id="1SAC"/>
<dbReference type="PDBsum" id="2A3W"/>
<dbReference type="PDBsum" id="2A3X"/>
<dbReference type="PDBsum" id="2A3Y"/>
<dbReference type="PDBsum" id="2W08"/>
<dbReference type="PDBsum" id="3D5O"/>
<dbReference type="PDBsum" id="3KQR"/>
<dbReference type="PDBsum" id="4AVS"/>
<dbReference type="PDBsum" id="4AVT"/>
<dbReference type="PDBsum" id="4AVV"/>
<dbReference type="PDBsum" id="4AYU"/>
<dbReference type="SMR" id="P02743"/>
<dbReference type="BioGRID" id="106822">
    <property type="interactions" value="30"/>
</dbReference>
<dbReference type="DIP" id="DIP-46911N"/>
<dbReference type="FunCoup" id="P02743">
    <property type="interactions" value="114"/>
</dbReference>
<dbReference type="IntAct" id="P02743">
    <property type="interactions" value="20"/>
</dbReference>
<dbReference type="MINT" id="P02743"/>
<dbReference type="STRING" id="9606.ENSP00000255040"/>
<dbReference type="ChEMBL" id="CHEMBL4929"/>
<dbReference type="DrugBank" id="DB07579">
    <property type="generic name" value="Bis-1,2-{[(Z)-2-carboxy-2-methyl-1,3-dioxane]-5-yloxycarbamoyl}-ethane"/>
</dbReference>
<dbReference type="DrugBank" id="DB07580">
    <property type="generic name" value="BIS-1,2-{[(Z)-2CARBOXY-2-METHYL-1,3-DIOXANE]-5-YLOXYCARBONYL}-PIPERAZINE"/>
</dbReference>
<dbReference type="DrugBank" id="DB09130">
    <property type="generic name" value="Copper"/>
</dbReference>
<dbReference type="DrugBank" id="DB01651">
    <property type="generic name" value="Methyl 4,6-O-[(1R)-1-carboxyethylidene]-beta-D-galactopyranoside"/>
</dbReference>
<dbReference type="DrugBank" id="DB13087">
    <property type="generic name" value="Miridesap"/>
</dbReference>
<dbReference type="DrugBank" id="DB01593">
    <property type="generic name" value="Zinc"/>
</dbReference>
<dbReference type="DrugBank" id="DB14487">
    <property type="generic name" value="Zinc acetate"/>
</dbReference>
<dbReference type="GuidetoPHARMACOLOGY" id="2839"/>
<dbReference type="TCDB" id="1.C.92.1.2">
    <property type="family name" value="the pentraxin (pentraxin) family"/>
</dbReference>
<dbReference type="UniLectin" id="P02743"/>
<dbReference type="CarbonylDB" id="P02743"/>
<dbReference type="GlyConnect" id="560">
    <property type="glycosylation" value="12 N-Linked glycans (1 site)"/>
</dbReference>
<dbReference type="GlyCosmos" id="P02743">
    <property type="glycosylation" value="2 sites, 15 glycans"/>
</dbReference>
<dbReference type="GlyGen" id="P02743">
    <property type="glycosylation" value="2 sites, 16 N-linked glycans (1 site), 1 O-linked glycan (1 site)"/>
</dbReference>
<dbReference type="iPTMnet" id="P02743"/>
<dbReference type="PhosphoSitePlus" id="P02743"/>
<dbReference type="BioMuta" id="APCS"/>
<dbReference type="DMDM" id="730704"/>
<dbReference type="OGP" id="P02743"/>
<dbReference type="REPRODUCTION-2DPAGE" id="IPI00022391"/>
<dbReference type="REPRODUCTION-2DPAGE" id="P02743"/>
<dbReference type="MassIVE" id="P02743"/>
<dbReference type="PaxDb" id="9606-ENSP00000255040"/>
<dbReference type="PeptideAtlas" id="P02743"/>
<dbReference type="ProteomicsDB" id="51560"/>
<dbReference type="ABCD" id="P02743">
    <property type="antibodies" value="1 sequenced antibody"/>
</dbReference>
<dbReference type="Antibodypedia" id="3590">
    <property type="antibodies" value="623 antibodies from 39 providers"/>
</dbReference>
<dbReference type="DNASU" id="325"/>
<dbReference type="Ensembl" id="ENST00000255040.3">
    <property type="protein sequence ID" value="ENSP00000255040.2"/>
    <property type="gene ID" value="ENSG00000132703.4"/>
</dbReference>
<dbReference type="GeneID" id="325"/>
<dbReference type="KEGG" id="hsa:325"/>
<dbReference type="MANE-Select" id="ENST00000255040.3">
    <property type="protein sequence ID" value="ENSP00000255040.2"/>
    <property type="RefSeq nucleotide sequence ID" value="NM_001639.4"/>
    <property type="RefSeq protein sequence ID" value="NP_001630.1"/>
</dbReference>
<dbReference type="AGR" id="HGNC:584"/>
<dbReference type="CTD" id="325"/>
<dbReference type="DisGeNET" id="325"/>
<dbReference type="GeneCards" id="APCS"/>
<dbReference type="HGNC" id="HGNC:584">
    <property type="gene designation" value="APCS"/>
</dbReference>
<dbReference type="HPA" id="ENSG00000132703">
    <property type="expression patterns" value="Tissue enriched (liver)"/>
</dbReference>
<dbReference type="MIM" id="104770">
    <property type="type" value="gene"/>
</dbReference>
<dbReference type="neXtProt" id="NX_P02743"/>
<dbReference type="OpenTargets" id="ENSG00000132703"/>
<dbReference type="PharmGKB" id="PA24877"/>
<dbReference type="VEuPathDB" id="HostDB:ENSG00000132703"/>
<dbReference type="eggNOG" id="ENOG502S201">
    <property type="taxonomic scope" value="Eukaryota"/>
</dbReference>
<dbReference type="GeneTree" id="ENSGT01100000263515"/>
<dbReference type="HOGENOM" id="CLU_032051_2_0_1"/>
<dbReference type="InParanoid" id="P02743"/>
<dbReference type="OMA" id="NPNILDW"/>
<dbReference type="OrthoDB" id="547680at2759"/>
<dbReference type="PAN-GO" id="P02743">
    <property type="GO annotations" value="3 GO annotations based on evolutionary models"/>
</dbReference>
<dbReference type="PhylomeDB" id="P02743"/>
<dbReference type="TreeFam" id="TF330208"/>
<dbReference type="PathwayCommons" id="P02743"/>
<dbReference type="Reactome" id="R-HSA-977225">
    <property type="pathway name" value="Amyloid fiber formation"/>
</dbReference>
<dbReference type="SignaLink" id="P02743"/>
<dbReference type="BioGRID-ORCS" id="325">
    <property type="hits" value="16 hits in 1143 CRISPR screens"/>
</dbReference>
<dbReference type="ChiTaRS" id="APCS">
    <property type="organism name" value="human"/>
</dbReference>
<dbReference type="EvolutionaryTrace" id="P02743"/>
<dbReference type="GeneWiki" id="Serum_amyloid_P_component"/>
<dbReference type="GenomeRNAi" id="325"/>
<dbReference type="Pharos" id="P02743">
    <property type="development level" value="Tchem"/>
</dbReference>
<dbReference type="PRO" id="PR:P02743"/>
<dbReference type="Proteomes" id="UP000005640">
    <property type="component" value="Chromosome 1"/>
</dbReference>
<dbReference type="RNAct" id="P02743">
    <property type="molecule type" value="protein"/>
</dbReference>
<dbReference type="Bgee" id="ENSG00000132703">
    <property type="expression patterns" value="Expressed in right lobe of liver and 94 other cell types or tissues"/>
</dbReference>
<dbReference type="ExpressionAtlas" id="P02743">
    <property type="expression patterns" value="baseline and differential"/>
</dbReference>
<dbReference type="GO" id="GO:0072562">
    <property type="term" value="C:blood microparticle"/>
    <property type="evidence" value="ECO:0007005"/>
    <property type="project" value="UniProtKB"/>
</dbReference>
<dbReference type="GO" id="GO:0062023">
    <property type="term" value="C:collagen-containing extracellular matrix"/>
    <property type="evidence" value="ECO:0007005"/>
    <property type="project" value="BHF-UCL"/>
</dbReference>
<dbReference type="GO" id="GO:0070062">
    <property type="term" value="C:extracellular exosome"/>
    <property type="evidence" value="ECO:0007005"/>
    <property type="project" value="UniProtKB"/>
</dbReference>
<dbReference type="GO" id="GO:0005576">
    <property type="term" value="C:extracellular region"/>
    <property type="evidence" value="ECO:0007005"/>
    <property type="project" value="BHF-UCL"/>
</dbReference>
<dbReference type="GO" id="GO:0005615">
    <property type="term" value="C:extracellular space"/>
    <property type="evidence" value="ECO:0000314"/>
    <property type="project" value="BHF-UCL"/>
</dbReference>
<dbReference type="GO" id="GO:0005634">
    <property type="term" value="C:nucleus"/>
    <property type="evidence" value="ECO:0007005"/>
    <property type="project" value="UniProtKB"/>
</dbReference>
<dbReference type="GO" id="GO:0005509">
    <property type="term" value="F:calcium ion binding"/>
    <property type="evidence" value="ECO:0000314"/>
    <property type="project" value="BHF-UCL"/>
</dbReference>
<dbReference type="GO" id="GO:0030246">
    <property type="term" value="F:carbohydrate binding"/>
    <property type="evidence" value="ECO:0007669"/>
    <property type="project" value="UniProtKB-KW"/>
</dbReference>
<dbReference type="GO" id="GO:0001849">
    <property type="term" value="F:complement component C1q complex binding"/>
    <property type="evidence" value="ECO:0000314"/>
    <property type="project" value="BHF-UCL"/>
</dbReference>
<dbReference type="GO" id="GO:0042802">
    <property type="term" value="F:identical protein binding"/>
    <property type="evidence" value="ECO:0000353"/>
    <property type="project" value="IntAct"/>
</dbReference>
<dbReference type="GO" id="GO:0051082">
    <property type="term" value="F:unfolded protein binding"/>
    <property type="evidence" value="ECO:0000304"/>
    <property type="project" value="ProtInc"/>
</dbReference>
<dbReference type="GO" id="GO:0046790">
    <property type="term" value="F:virion binding"/>
    <property type="evidence" value="ECO:0000314"/>
    <property type="project" value="BHF-UCL"/>
</dbReference>
<dbReference type="GO" id="GO:0006953">
    <property type="term" value="P:acute-phase response"/>
    <property type="evidence" value="ECO:0000304"/>
    <property type="project" value="ProtInc"/>
</dbReference>
<dbReference type="GO" id="GO:0051131">
    <property type="term" value="P:chaperone-mediated protein complex assembly"/>
    <property type="evidence" value="ECO:0000304"/>
    <property type="project" value="ProtInc"/>
</dbReference>
<dbReference type="GO" id="GO:0046597">
    <property type="term" value="P:host-mediated suppression of symbiont invasion"/>
    <property type="evidence" value="ECO:0000314"/>
    <property type="project" value="BHF-UCL"/>
</dbReference>
<dbReference type="GO" id="GO:0045087">
    <property type="term" value="P:innate immune response"/>
    <property type="evidence" value="ECO:0000314"/>
    <property type="project" value="BHF-UCL"/>
</dbReference>
<dbReference type="GO" id="GO:0044871">
    <property type="term" value="P:negative regulation by host of viral glycoprotein metabolic process"/>
    <property type="evidence" value="ECO:0000314"/>
    <property type="project" value="BHF-UCL"/>
</dbReference>
<dbReference type="GO" id="GO:0002674">
    <property type="term" value="P:negative regulation of acute inflammatory response"/>
    <property type="evidence" value="ECO:0000305"/>
    <property type="project" value="BHF-UCL"/>
</dbReference>
<dbReference type="GO" id="GO:1903019">
    <property type="term" value="P:negative regulation of glycoprotein metabolic process"/>
    <property type="evidence" value="ECO:0000314"/>
    <property type="project" value="BHF-UCL"/>
</dbReference>
<dbReference type="GO" id="GO:0045656">
    <property type="term" value="P:negative regulation of monocyte differentiation"/>
    <property type="evidence" value="ECO:0000314"/>
    <property type="project" value="BHF-UCL"/>
</dbReference>
<dbReference type="GO" id="GO:0048525">
    <property type="term" value="P:negative regulation of viral process"/>
    <property type="evidence" value="ECO:0000314"/>
    <property type="project" value="BHF-UCL"/>
</dbReference>
<dbReference type="GO" id="GO:0061045">
    <property type="term" value="P:negative regulation of wound healing"/>
    <property type="evidence" value="ECO:0000305"/>
    <property type="project" value="BHF-UCL"/>
</dbReference>
<dbReference type="GO" id="GO:0006457">
    <property type="term" value="P:protein folding"/>
    <property type="evidence" value="ECO:0000304"/>
    <property type="project" value="ProtInc"/>
</dbReference>
<dbReference type="CDD" id="cd00152">
    <property type="entry name" value="PTX"/>
    <property type="match status" value="1"/>
</dbReference>
<dbReference type="FunFam" id="2.60.120.200:FF:000070">
    <property type="entry name" value="Serum amyloid P-component"/>
    <property type="match status" value="1"/>
</dbReference>
<dbReference type="Gene3D" id="2.60.120.200">
    <property type="match status" value="1"/>
</dbReference>
<dbReference type="InterPro" id="IPR013320">
    <property type="entry name" value="ConA-like_dom_sf"/>
</dbReference>
<dbReference type="InterPro" id="IPR030476">
    <property type="entry name" value="Pentaxin_CS"/>
</dbReference>
<dbReference type="InterPro" id="IPR001759">
    <property type="entry name" value="Pentraxin-related"/>
</dbReference>
<dbReference type="InterPro" id="IPR051005">
    <property type="entry name" value="Pentraxin_domain"/>
</dbReference>
<dbReference type="PANTHER" id="PTHR45869">
    <property type="entry name" value="C-REACTIVE PROTEIN-RELATED"/>
    <property type="match status" value="1"/>
</dbReference>
<dbReference type="PANTHER" id="PTHR45869:SF5">
    <property type="entry name" value="SERUM AMYLOID P-COMPONENT"/>
    <property type="match status" value="1"/>
</dbReference>
<dbReference type="Pfam" id="PF00354">
    <property type="entry name" value="Pentaxin"/>
    <property type="match status" value="1"/>
</dbReference>
<dbReference type="PRINTS" id="PR00895">
    <property type="entry name" value="PENTAXIN"/>
</dbReference>
<dbReference type="SMART" id="SM00159">
    <property type="entry name" value="PTX"/>
    <property type="match status" value="1"/>
</dbReference>
<dbReference type="SUPFAM" id="SSF49899">
    <property type="entry name" value="Concanavalin A-like lectins/glucanases"/>
    <property type="match status" value="1"/>
</dbReference>
<dbReference type="PROSITE" id="PS00289">
    <property type="entry name" value="PTX_1"/>
    <property type="match status" value="1"/>
</dbReference>
<dbReference type="PROSITE" id="PS51828">
    <property type="entry name" value="PTX_2"/>
    <property type="match status" value="1"/>
</dbReference>
<accession>P02743</accession>
<comment type="function">
    <text>Can interact with DNA and histones and may scavenge nuclear material released from damaged circulating cells. May also function as a calcium-dependent lectin.</text>
</comment>
<comment type="cofactor">
    <cofactor>
        <name>Ca(2+)</name>
        <dbReference type="ChEBI" id="CHEBI:29108"/>
    </cofactor>
    <text>Binds 2 calcium ions per subunit.</text>
</comment>
<comment type="subunit">
    <text>Homopentamer. Pentraxin (or pentaxin) have a discoid arrangement of 5 non-covalently bound subunits.</text>
</comment>
<comment type="interaction">
    <interactant intactId="EBI-2115799">
        <id>P02743</id>
    </interactant>
    <interactant intactId="EBI-750671">
        <id>Q15699</id>
        <label>ALX1</label>
    </interactant>
    <organismsDiffer>false</organismsDiffer>
    <experiments>3</experiments>
</comment>
<comment type="interaction">
    <interactant intactId="EBI-2115799">
        <id>P02743</id>
    </interactant>
    <interactant intactId="EBI-2115799">
        <id>P02743</id>
        <label>APCS</label>
    </interactant>
    <organismsDiffer>false</organismsDiffer>
    <experiments>8</experiments>
</comment>
<comment type="interaction">
    <interactant intactId="EBI-2115799">
        <id>P02743</id>
    </interactant>
    <interactant intactId="EBI-77613">
        <id>P05067</id>
        <label>APP</label>
    </interactant>
    <organismsDiffer>false</organismsDiffer>
    <experiments>3</experiments>
</comment>
<comment type="interaction">
    <interactant intactId="EBI-2115799">
        <id>P02743</id>
    </interactant>
    <interactant intactId="EBI-21199571">
        <id>Q9Y5P4-1</id>
        <label>CERT1</label>
    </interactant>
    <organismsDiffer>false</organismsDiffer>
    <experiments>6</experiments>
</comment>
<comment type="interaction">
    <interactant intactId="EBI-2115799">
        <id>P02743</id>
    </interactant>
    <interactant intactId="EBI-11156432">
        <id>Q9Y5P4-2</id>
        <label>CERT1</label>
    </interactant>
    <organismsDiffer>false</organismsDiffer>
    <experiments>4</experiments>
</comment>
<comment type="interaction">
    <interactant intactId="EBI-2115799">
        <id>P02743</id>
    </interactant>
    <interactant intactId="EBI-5325353">
        <id>P11226</id>
        <label>MBL2</label>
    </interactant>
    <organismsDiffer>false</organismsDiffer>
    <experiments>2</experiments>
</comment>
<comment type="subcellular location">
    <subcellularLocation>
        <location>Secreted</location>
    </subcellularLocation>
</comment>
<comment type="tissue specificity">
    <text evidence="2">Found in serum and urine.</text>
</comment>
<comment type="PTM">
    <text evidence="2 3 5">N-glycosylated with a complex biantennary oligosaccharide chain with a sialic acid at the end (disialo-SAP). Monosialo-SAP as well as asioalo-SAP are also detected (PubMed:15174148).</text>
</comment>
<comment type="mass spectrometry" mass="25462.5" error="1.1" method="Electrospray" evidence="2 8">
    <molecule>Serum amyloid P-component</molecule>
</comment>
<comment type="mass spectrometry" mass="25463.0" error="3.0" method="MALDI" evidence="2 8">
    <molecule>Serum amyloid P-component</molecule>
</comment>
<comment type="disease">
    <text>SAP is a precursor of amyloid component P which is found in basement membrane and associated with amyloid deposits.</text>
</comment>
<comment type="similarity">
    <text evidence="9">Belongs to the pentraxin family.</text>
</comment>
<comment type="online information" name="Wikipedia">
    <link uri="https://en.wikipedia.org/wiki/Serum_Amyloid_P_Component"/>
    <text>Serum amyloid P component entry</text>
</comment>
<organism>
    <name type="scientific">Homo sapiens</name>
    <name type="common">Human</name>
    <dbReference type="NCBI Taxonomy" id="9606"/>
    <lineage>
        <taxon>Eukaryota</taxon>
        <taxon>Metazoa</taxon>
        <taxon>Chordata</taxon>
        <taxon>Craniata</taxon>
        <taxon>Vertebrata</taxon>
        <taxon>Euteleostomi</taxon>
        <taxon>Mammalia</taxon>
        <taxon>Eutheria</taxon>
        <taxon>Euarchontoglires</taxon>
        <taxon>Primates</taxon>
        <taxon>Haplorrhini</taxon>
        <taxon>Catarrhini</taxon>
        <taxon>Hominidae</taxon>
        <taxon>Homo</taxon>
    </lineage>
</organism>
<evidence type="ECO:0000255" key="1">
    <source>
        <dbReference type="PROSITE-ProRule" id="PRU01172"/>
    </source>
</evidence>
<evidence type="ECO:0000269" key="2">
    <source>
    </source>
</evidence>
<evidence type="ECO:0000269" key="3">
    <source>
    </source>
</evidence>
<evidence type="ECO:0000269" key="4">
    <source>
    </source>
</evidence>
<evidence type="ECO:0000269" key="5">
    <source>
    </source>
</evidence>
<evidence type="ECO:0000269" key="6">
    <source>
    </source>
</evidence>
<evidence type="ECO:0000269" key="7">
    <source>
    </source>
</evidence>
<evidence type="ECO:0000269" key="8">
    <source>
    </source>
</evidence>
<evidence type="ECO:0000305" key="9"/>
<evidence type="ECO:0007829" key="10">
    <source>
        <dbReference type="PDB" id="4AVS"/>
    </source>
</evidence>
<evidence type="ECO:0007829" key="11">
    <source>
        <dbReference type="PDB" id="4AYU"/>
    </source>
</evidence>
<feature type="signal peptide" evidence="6 7">
    <location>
        <begin position="1"/>
        <end position="19"/>
    </location>
</feature>
<feature type="chain" id="PRO_0000023540" description="Serum amyloid P-component">
    <location>
        <begin position="20"/>
        <end position="223"/>
    </location>
</feature>
<feature type="chain" id="PRO_0000023541" description="Serum amyloid P-component(1-203)">
    <location>
        <begin position="20"/>
        <end position="222"/>
    </location>
</feature>
<feature type="domain" description="Pentraxin (PTX)" evidence="1">
    <location>
        <begin position="24"/>
        <end position="223"/>
    </location>
</feature>
<feature type="binding site" evidence="1">
    <location>
        <position position="77"/>
    </location>
    <ligand>
        <name>Ca(2+)</name>
        <dbReference type="ChEBI" id="CHEBI:29108"/>
        <label>1</label>
    </ligand>
</feature>
<feature type="binding site" evidence="1">
    <location>
        <position position="78"/>
    </location>
    <ligand>
        <name>Ca(2+)</name>
        <dbReference type="ChEBI" id="CHEBI:29108"/>
        <label>1</label>
    </ligand>
</feature>
<feature type="binding site" evidence="1">
    <location>
        <position position="155"/>
    </location>
    <ligand>
        <name>Ca(2+)</name>
        <dbReference type="ChEBI" id="CHEBI:29108"/>
        <label>1</label>
    </ligand>
</feature>
<feature type="binding site" evidence="1">
    <location>
        <position position="155"/>
    </location>
    <ligand>
        <name>Ca(2+)</name>
        <dbReference type="ChEBI" id="CHEBI:29108"/>
        <label>2</label>
    </ligand>
</feature>
<feature type="binding site" evidence="1">
    <location>
        <position position="156"/>
    </location>
    <ligand>
        <name>Ca(2+)</name>
        <dbReference type="ChEBI" id="CHEBI:29108"/>
        <label>1</label>
    </ligand>
</feature>
<feature type="binding site" evidence="1">
    <location>
        <position position="157"/>
    </location>
    <ligand>
        <name>Ca(2+)</name>
        <dbReference type="ChEBI" id="CHEBI:29108"/>
        <label>1</label>
    </ligand>
</feature>
<feature type="binding site" evidence="1">
    <location>
        <position position="157"/>
    </location>
    <ligand>
        <name>Ca(2+)</name>
        <dbReference type="ChEBI" id="CHEBI:29108"/>
        <label>2</label>
    </ligand>
</feature>
<feature type="binding site" evidence="1">
    <location>
        <position position="167"/>
    </location>
    <ligand>
        <name>Ca(2+)</name>
        <dbReference type="ChEBI" id="CHEBI:29108"/>
        <label>2</label>
    </ligand>
</feature>
<feature type="glycosylation site" id="CAR_000169" description="N-linked (GlcNAc...) asparagine" evidence="3 5">
    <location>
        <position position="51"/>
    </location>
</feature>
<feature type="disulfide bond" evidence="1 6">
    <location>
        <begin position="55"/>
        <end position="114"/>
    </location>
</feature>
<feature type="sequence variant" id="VAR_035814" description="In a breast cancer sample; somatic mutation." evidence="4">
    <original>G</original>
    <variation>S</variation>
    <location>
        <position position="141"/>
    </location>
</feature>
<feature type="sequence variant" id="VAR_006054">
    <original>E</original>
    <variation>G</variation>
    <location>
        <position position="155"/>
    </location>
</feature>
<feature type="sequence variant" id="VAR_006055">
    <original>S</original>
    <variation>G</variation>
    <location>
        <position position="158"/>
    </location>
</feature>
<feature type="sequence conflict" description="In Ref. 1; AAA60302." evidence="9" ref="1">
    <original>S</original>
    <variation>P</variation>
    <location>
        <position position="101"/>
    </location>
</feature>
<feature type="strand" evidence="10">
    <location>
        <begin position="26"/>
        <end position="30"/>
    </location>
</feature>
<feature type="strand" evidence="10">
    <location>
        <begin position="38"/>
        <end position="41"/>
    </location>
</feature>
<feature type="strand" evidence="10">
    <location>
        <begin position="49"/>
        <end position="59"/>
    </location>
</feature>
<feature type="strand" evidence="10">
    <location>
        <begin position="66"/>
        <end position="73"/>
    </location>
</feature>
<feature type="strand" evidence="10">
    <location>
        <begin position="76"/>
        <end position="86"/>
    </location>
</feature>
<feature type="strand" evidence="10">
    <location>
        <begin position="89"/>
        <end position="94"/>
    </location>
</feature>
<feature type="strand" evidence="10">
    <location>
        <begin position="97"/>
        <end position="102"/>
    </location>
</feature>
<feature type="strand" evidence="10">
    <location>
        <begin position="111"/>
        <end position="118"/>
    </location>
</feature>
<feature type="turn" evidence="10">
    <location>
        <begin position="119"/>
        <end position="121"/>
    </location>
</feature>
<feature type="strand" evidence="10">
    <location>
        <begin position="123"/>
        <end position="128"/>
    </location>
</feature>
<feature type="strand" evidence="10">
    <location>
        <begin position="149"/>
        <end position="154"/>
    </location>
</feature>
<feature type="strand" evidence="10">
    <location>
        <begin position="157"/>
        <end position="160"/>
    </location>
</feature>
<feature type="helix" evidence="10">
    <location>
        <begin position="165"/>
        <end position="167"/>
    </location>
</feature>
<feature type="strand" evidence="10">
    <location>
        <begin position="171"/>
        <end position="181"/>
    </location>
</feature>
<feature type="helix" evidence="10">
    <location>
        <begin position="185"/>
        <end position="193"/>
    </location>
</feature>
<feature type="strand" evidence="10">
    <location>
        <begin position="200"/>
        <end position="203"/>
    </location>
</feature>
<feature type="helix" evidence="11">
    <location>
        <begin position="204"/>
        <end position="206"/>
    </location>
</feature>
<feature type="strand" evidence="10">
    <location>
        <begin position="209"/>
        <end position="214"/>
    </location>
</feature>
<feature type="strand" evidence="10">
    <location>
        <begin position="216"/>
        <end position="219"/>
    </location>
</feature>